<evidence type="ECO:0000255" key="1">
    <source>
        <dbReference type="HAMAP-Rule" id="MF_00690"/>
    </source>
</evidence>
<protein>
    <recommendedName>
        <fullName evidence="1">UPF0270 protein YheU</fullName>
    </recommendedName>
</protein>
<accession>Q3YWR7</accession>
<proteinExistence type="inferred from homology"/>
<comment type="similarity">
    <text evidence="1">Belongs to the UPF0270 family.</text>
</comment>
<feature type="chain" id="PRO_1000045177" description="UPF0270 protein YheU">
    <location>
        <begin position="1"/>
        <end position="72"/>
    </location>
</feature>
<sequence length="72" mass="8470">MLIPWQDLSPETLENLIESFVLREGTDYGEHERTLEQKVADVKRQLQCGEAVLVWSELHETVNIMPRSQFRE</sequence>
<reference key="1">
    <citation type="journal article" date="2005" name="Nucleic Acids Res.">
        <title>Genome dynamics and diversity of Shigella species, the etiologic agents of bacillary dysentery.</title>
        <authorList>
            <person name="Yang F."/>
            <person name="Yang J."/>
            <person name="Zhang X."/>
            <person name="Chen L."/>
            <person name="Jiang Y."/>
            <person name="Yan Y."/>
            <person name="Tang X."/>
            <person name="Wang J."/>
            <person name="Xiong Z."/>
            <person name="Dong J."/>
            <person name="Xue Y."/>
            <person name="Zhu Y."/>
            <person name="Xu X."/>
            <person name="Sun L."/>
            <person name="Chen S."/>
            <person name="Nie H."/>
            <person name="Peng J."/>
            <person name="Xu J."/>
            <person name="Wang Y."/>
            <person name="Yuan Z."/>
            <person name="Wen Y."/>
            <person name="Yao Z."/>
            <person name="Shen Y."/>
            <person name="Qiang B."/>
            <person name="Hou Y."/>
            <person name="Yu J."/>
            <person name="Jin Q."/>
        </authorList>
    </citation>
    <scope>NUCLEOTIDE SEQUENCE [LARGE SCALE GENOMIC DNA]</scope>
    <source>
        <strain>Ss046</strain>
    </source>
</reference>
<name>YHEU_SHISS</name>
<dbReference type="EMBL" id="CP000038">
    <property type="protein sequence ID" value="AAZ90045.1"/>
    <property type="molecule type" value="Genomic_DNA"/>
</dbReference>
<dbReference type="RefSeq" id="WP_000907085.1">
    <property type="nucleotide sequence ID" value="NC_007384.1"/>
</dbReference>
<dbReference type="SMR" id="Q3YWR7"/>
<dbReference type="KEGG" id="ssn:SSON_3485"/>
<dbReference type="HOGENOM" id="CLU_186759_1_0_6"/>
<dbReference type="Proteomes" id="UP000002529">
    <property type="component" value="Chromosome"/>
</dbReference>
<dbReference type="Gene3D" id="1.10.10.610">
    <property type="entry name" value="YehU-like"/>
    <property type="match status" value="1"/>
</dbReference>
<dbReference type="HAMAP" id="MF_00690">
    <property type="entry name" value="UPF0270"/>
    <property type="match status" value="1"/>
</dbReference>
<dbReference type="InterPro" id="IPR010648">
    <property type="entry name" value="UPF0270"/>
</dbReference>
<dbReference type="InterPro" id="IPR036685">
    <property type="entry name" value="YehU-like_sf"/>
</dbReference>
<dbReference type="NCBIfam" id="NF003438">
    <property type="entry name" value="PRK04966.1"/>
    <property type="match status" value="1"/>
</dbReference>
<dbReference type="Pfam" id="PF06794">
    <property type="entry name" value="UPF0270"/>
    <property type="match status" value="1"/>
</dbReference>
<dbReference type="PIRSF" id="PIRSF006169">
    <property type="entry name" value="UCP006169"/>
    <property type="match status" value="1"/>
</dbReference>
<dbReference type="SUPFAM" id="SSF118001">
    <property type="entry name" value="YehU-like"/>
    <property type="match status" value="1"/>
</dbReference>
<organism>
    <name type="scientific">Shigella sonnei (strain Ss046)</name>
    <dbReference type="NCBI Taxonomy" id="300269"/>
    <lineage>
        <taxon>Bacteria</taxon>
        <taxon>Pseudomonadati</taxon>
        <taxon>Pseudomonadota</taxon>
        <taxon>Gammaproteobacteria</taxon>
        <taxon>Enterobacterales</taxon>
        <taxon>Enterobacteriaceae</taxon>
        <taxon>Shigella</taxon>
    </lineage>
</organism>
<keyword id="KW-1185">Reference proteome</keyword>
<gene>
    <name evidence="1" type="primary">yheU</name>
    <name type="ordered locus">SSON_3485</name>
</gene>